<feature type="signal peptide" evidence="3">
    <location>
        <begin position="1"/>
        <end position="25"/>
    </location>
</feature>
<feature type="propeptide" id="PRO_0000435246" description="Activation peptide" evidence="1">
    <location>
        <begin position="26"/>
        <end position="113"/>
    </location>
</feature>
<feature type="chain" id="PRO_0000435247" description="Subtilisin-like protease SBT4.11" evidence="3">
    <location>
        <begin position="114"/>
        <end status="unknown"/>
    </location>
</feature>
<feature type="propeptide" id="PRO_0000435248" evidence="1">
    <location>
        <begin status="unknown"/>
        <end position="736"/>
    </location>
</feature>
<feature type="domain" description="Inhibitor I9" evidence="3">
    <location>
        <begin position="35"/>
        <end position="112"/>
    </location>
</feature>
<feature type="domain" description="Peptidase S8" evidence="5">
    <location>
        <begin position="117"/>
        <end position="579"/>
    </location>
</feature>
<feature type="domain" description="PA" evidence="3">
    <location>
        <begin position="355"/>
        <end position="437"/>
    </location>
</feature>
<feature type="active site" description="Charge relay system" evidence="5">
    <location>
        <position position="145"/>
    </location>
</feature>
<feature type="active site" description="Charge relay system" evidence="5">
    <location>
        <position position="200"/>
    </location>
</feature>
<feature type="active site" description="Charge relay system" evidence="5">
    <location>
        <position position="518"/>
    </location>
</feature>
<feature type="glycosylation site" description="N-linked (GlcNAc...) asparagine" evidence="4">
    <location>
        <position position="176"/>
    </location>
</feature>
<feature type="glycosylation site" description="N-linked (GlcNAc...) asparagine" evidence="4">
    <location>
        <position position="215"/>
    </location>
</feature>
<feature type="glycosylation site" description="N-linked (GlcNAc...) asparagine" evidence="4">
    <location>
        <position position="223"/>
    </location>
</feature>
<feature type="glycosylation site" description="N-linked (GlcNAc...) asparagine" evidence="4">
    <location>
        <position position="555"/>
    </location>
</feature>
<feature type="glycosylation site" description="N-linked (GlcNAc...) asparagine" evidence="4">
    <location>
        <position position="602"/>
    </location>
</feature>
<feature type="glycosylation site" description="N-linked (GlcNAc...) asparagine" evidence="4">
    <location>
        <position position="638"/>
    </location>
</feature>
<feature type="glycosylation site" description="N-linked (GlcNAc...) asparagine" evidence="4">
    <location>
        <position position="646"/>
    </location>
</feature>
<feature type="glycosylation site" description="N-linked (GlcNAc...) asparagine" evidence="4">
    <location>
        <position position="656"/>
    </location>
</feature>
<feature type="splice variant" id="VSP_058032" description="In isoform 2.">
    <location>
        <begin position="109"/>
        <end position="136"/>
    </location>
</feature>
<name>SBT4B_ARATH</name>
<comment type="subcellular location">
    <subcellularLocation>
        <location evidence="2">Secreted</location>
    </subcellularLocation>
</comment>
<comment type="alternative products">
    <event type="alternative splicing"/>
    <isoform>
        <id>Q9FIG1-1</id>
        <name>1</name>
        <sequence type="displayed"/>
    </isoform>
    <isoform>
        <id>Q9FIG1-2</id>
        <name>2</name>
        <sequence type="described" ref="VSP_058032"/>
    </isoform>
    <text evidence="8">Additional isoforms seem to exist.</text>
</comment>
<comment type="PTM">
    <text evidence="1">The C-terminal propeptide is autocleaved.</text>
</comment>
<comment type="similarity">
    <text evidence="8">Belongs to the peptidase S8 family.</text>
</comment>
<comment type="sequence caution" evidence="8">
    <conflict type="erroneous gene model prediction">
        <sequence resource="EMBL-CDS" id="AED97146"/>
    </conflict>
</comment>
<comment type="sequence caution" evidence="8">
    <conflict type="erroneous gene model prediction">
        <sequence resource="EMBL-CDS" id="BAB09759"/>
    </conflict>
</comment>
<proteinExistence type="evidence at transcript level"/>
<organism>
    <name type="scientific">Arabidopsis thaliana</name>
    <name type="common">Mouse-ear cress</name>
    <dbReference type="NCBI Taxonomy" id="3702"/>
    <lineage>
        <taxon>Eukaryota</taxon>
        <taxon>Viridiplantae</taxon>
        <taxon>Streptophyta</taxon>
        <taxon>Embryophyta</taxon>
        <taxon>Tracheophyta</taxon>
        <taxon>Spermatophyta</taxon>
        <taxon>Magnoliopsida</taxon>
        <taxon>eudicotyledons</taxon>
        <taxon>Gunneridae</taxon>
        <taxon>Pentapetalae</taxon>
        <taxon>rosids</taxon>
        <taxon>malvids</taxon>
        <taxon>Brassicales</taxon>
        <taxon>Brassicaceae</taxon>
        <taxon>Camelineae</taxon>
        <taxon>Arabidopsis</taxon>
    </lineage>
</organism>
<sequence length="736" mass="78895">MAKRGAFSSFHSFLIVLLFLNSVLAVTHGHQDKQVYIVYMGSLPSRADYTPMSHHMNILQEVARESSIEGRLVRSYKRSFNGFVARLTESERERVADMEGVVSVFPNKKLKLQTSASWDFMGLKEGKGTKRNPSVESDTIIGVFDGGIWPESESFSDKGFGPPPKKWKGICAGGKNFTCNNKLIGARHYSPGDARDSTGHGTHTASIAAGNAVANTSFFGIGNGTVRGAVPASRIAVYRVCAGECRDDAILSAFDDAISDGVDIITISIGDINVYPFEKDPIAIGAFHAMSKGILTVNAAGNTGPDTASITSLAPWLLTVAASTANREFVSKVVLGDGKTLVGKSVNGFDLKGKKFPLVYGKSAALSLSQAKCAEDCTPECLDASLVKGKILVCNRFLPYVAYTKRAVAAIFEDGSDWAQINGLPVSGLQKDDFESVLSYFKSEKSPEAAVLKSESIFYQTAPKILSFSSRGPNIIVADILKPDITAPGLEILAANSLRASPFYDTAYVKYSVESGTSMSCPHAAGVAAYVKTFHPQWSPSMIKSAIMTTAWSMNASQSGYASTEFAYGAGHVDPIAATNPGLVYEITKTDYFAFLCGMNYNKTTVKLISGEAVTCSEKISPRNLNYPSMSAKLSGSNISFIVTFNRTVTNVGTPNSTYKSKVVLNHGSKLNVKVSPSVLSMKSMNEKQSFTVTVSASELHSELPSSANLIWSDGTHNVRSPIVVYTGDFSQPSSS</sequence>
<dbReference type="EC" id="3.4.21.-" evidence="6"/>
<dbReference type="EMBL" id="AB016890">
    <property type="protein sequence ID" value="BAB09759.1"/>
    <property type="status" value="ALT_SEQ"/>
    <property type="molecule type" value="Genomic_DNA"/>
</dbReference>
<dbReference type="EMBL" id="CP002688">
    <property type="protein sequence ID" value="AED97146.1"/>
    <property type="status" value="ALT_SEQ"/>
    <property type="molecule type" value="Genomic_DNA"/>
</dbReference>
<dbReference type="EMBL" id="CP002688">
    <property type="protein sequence ID" value="ANM68397.1"/>
    <property type="molecule type" value="Genomic_DNA"/>
</dbReference>
<dbReference type="EMBL" id="BT003861">
    <property type="protein sequence ID" value="AAO41911.1"/>
    <property type="molecule type" value="mRNA"/>
</dbReference>
<dbReference type="RefSeq" id="NP_001330156.1">
    <property type="nucleotide sequence ID" value="NM_001345336.1"/>
</dbReference>
<dbReference type="RefSeq" id="NP_001330157.1">
    <molecule id="Q9FIG1-1"/>
    <property type="nucleotide sequence ID" value="NM_001345337.1"/>
</dbReference>
<dbReference type="RefSeq" id="NP_568899.1">
    <property type="nucleotide sequence ID" value="NM_125303.2"/>
</dbReference>
<dbReference type="SMR" id="Q9FIG1"/>
<dbReference type="FunCoup" id="Q9FIG1">
    <property type="interactions" value="175"/>
</dbReference>
<dbReference type="STRING" id="3702.Q9FIG1"/>
<dbReference type="MEROPS" id="S08.A15"/>
<dbReference type="GlyCosmos" id="Q9FIG1">
    <property type="glycosylation" value="8 sites, No reported glycans"/>
</dbReference>
<dbReference type="GlyGen" id="Q9FIG1">
    <property type="glycosylation" value="8 sites"/>
</dbReference>
<dbReference type="PaxDb" id="3702-AT5G59130.1"/>
<dbReference type="EnsemblPlants" id="AT5G59130.4">
    <molecule id="Q9FIG1-1"/>
    <property type="protein sequence ID" value="AT5G59130.4"/>
    <property type="gene ID" value="AT5G59130"/>
</dbReference>
<dbReference type="GeneID" id="836031"/>
<dbReference type="Gramene" id="AT5G59130.4">
    <molecule id="Q9FIG1-1"/>
    <property type="protein sequence ID" value="AT5G59130.4"/>
    <property type="gene ID" value="AT5G59130"/>
</dbReference>
<dbReference type="KEGG" id="ath:AT5G59130"/>
<dbReference type="Araport" id="AT5G59130"/>
<dbReference type="TAIR" id="AT5G59130"/>
<dbReference type="eggNOG" id="ENOG502QRA7">
    <property type="taxonomic scope" value="Eukaryota"/>
</dbReference>
<dbReference type="InParanoid" id="Q9FIG1"/>
<dbReference type="PRO" id="PR:Q9FIG1"/>
<dbReference type="Proteomes" id="UP000006548">
    <property type="component" value="Chromosome 5"/>
</dbReference>
<dbReference type="ExpressionAtlas" id="Q9FIG1">
    <property type="expression patterns" value="baseline and differential"/>
</dbReference>
<dbReference type="GO" id="GO:0005576">
    <property type="term" value="C:extracellular region"/>
    <property type="evidence" value="ECO:0007669"/>
    <property type="project" value="UniProtKB-SubCell"/>
</dbReference>
<dbReference type="GO" id="GO:0004252">
    <property type="term" value="F:serine-type endopeptidase activity"/>
    <property type="evidence" value="ECO:0007669"/>
    <property type="project" value="InterPro"/>
</dbReference>
<dbReference type="GO" id="GO:0006508">
    <property type="term" value="P:proteolysis"/>
    <property type="evidence" value="ECO:0007669"/>
    <property type="project" value="UniProtKB-KW"/>
</dbReference>
<dbReference type="CDD" id="cd02120">
    <property type="entry name" value="PA_subtilisin_like"/>
    <property type="match status" value="1"/>
</dbReference>
<dbReference type="CDD" id="cd04852">
    <property type="entry name" value="Peptidases_S8_3"/>
    <property type="match status" value="1"/>
</dbReference>
<dbReference type="FunFam" id="3.30.70.80:FF:000002">
    <property type="entry name" value="Subtilisin-like protease SBT5.3"/>
    <property type="match status" value="1"/>
</dbReference>
<dbReference type="Gene3D" id="2.60.40.2310">
    <property type="match status" value="1"/>
</dbReference>
<dbReference type="Gene3D" id="3.50.30.30">
    <property type="match status" value="1"/>
</dbReference>
<dbReference type="Gene3D" id="3.30.70.80">
    <property type="entry name" value="Peptidase S8 propeptide/proteinase inhibitor I9"/>
    <property type="match status" value="1"/>
</dbReference>
<dbReference type="Gene3D" id="3.40.50.200">
    <property type="entry name" value="Peptidase S8/S53 domain"/>
    <property type="match status" value="1"/>
</dbReference>
<dbReference type="InterPro" id="IPR000209">
    <property type="entry name" value="Peptidase_S8/S53_dom"/>
</dbReference>
<dbReference type="InterPro" id="IPR036852">
    <property type="entry name" value="Peptidase_S8/S53_dom_sf"/>
</dbReference>
<dbReference type="InterPro" id="IPR023828">
    <property type="entry name" value="Peptidase_S8_Ser-AS"/>
</dbReference>
<dbReference type="InterPro" id="IPR015500">
    <property type="entry name" value="Peptidase_S8_subtilisin-rel"/>
</dbReference>
<dbReference type="InterPro" id="IPR034197">
    <property type="entry name" value="Peptidases_S8_3"/>
</dbReference>
<dbReference type="InterPro" id="IPR010259">
    <property type="entry name" value="S8pro/Inhibitor_I9"/>
</dbReference>
<dbReference type="InterPro" id="IPR037045">
    <property type="entry name" value="S8pro/Inhibitor_I9_sf"/>
</dbReference>
<dbReference type="InterPro" id="IPR045051">
    <property type="entry name" value="SBT"/>
</dbReference>
<dbReference type="InterPro" id="IPR041469">
    <property type="entry name" value="Subtilisin-like_FN3"/>
</dbReference>
<dbReference type="PANTHER" id="PTHR10795">
    <property type="entry name" value="PROPROTEIN CONVERTASE SUBTILISIN/KEXIN"/>
    <property type="match status" value="1"/>
</dbReference>
<dbReference type="Pfam" id="PF17766">
    <property type="entry name" value="fn3_6"/>
    <property type="match status" value="1"/>
</dbReference>
<dbReference type="Pfam" id="PF05922">
    <property type="entry name" value="Inhibitor_I9"/>
    <property type="match status" value="1"/>
</dbReference>
<dbReference type="Pfam" id="PF00082">
    <property type="entry name" value="Peptidase_S8"/>
    <property type="match status" value="1"/>
</dbReference>
<dbReference type="PRINTS" id="PR00723">
    <property type="entry name" value="SUBTILISIN"/>
</dbReference>
<dbReference type="SUPFAM" id="SSF52743">
    <property type="entry name" value="Subtilisin-like"/>
    <property type="match status" value="1"/>
</dbReference>
<dbReference type="PROSITE" id="PS51892">
    <property type="entry name" value="SUBTILASE"/>
    <property type="match status" value="1"/>
</dbReference>
<dbReference type="PROSITE" id="PS00138">
    <property type="entry name" value="SUBTILASE_SER"/>
    <property type="match status" value="1"/>
</dbReference>
<reference key="1">
    <citation type="journal article" date="1998" name="DNA Res.">
        <title>Structural analysis of Arabidopsis thaliana chromosome 5. VIII. Sequence features of the regions of 1,081,958 bp covered by seventeen physically assigned P1 and TAC clones.</title>
        <authorList>
            <person name="Asamizu E."/>
            <person name="Sato S."/>
            <person name="Kaneko T."/>
            <person name="Nakamura Y."/>
            <person name="Kotani H."/>
            <person name="Miyajima N."/>
            <person name="Tabata S."/>
        </authorList>
    </citation>
    <scope>NUCLEOTIDE SEQUENCE [LARGE SCALE GENOMIC DNA]</scope>
    <source>
        <strain>cv. Columbia</strain>
    </source>
</reference>
<reference key="2">
    <citation type="journal article" date="2017" name="Plant J.">
        <title>Araport11: a complete reannotation of the Arabidopsis thaliana reference genome.</title>
        <authorList>
            <person name="Cheng C.Y."/>
            <person name="Krishnakumar V."/>
            <person name="Chan A.P."/>
            <person name="Thibaud-Nissen F."/>
            <person name="Schobel S."/>
            <person name="Town C.D."/>
        </authorList>
    </citation>
    <scope>GENOME REANNOTATION</scope>
    <source>
        <strain>cv. Columbia</strain>
    </source>
</reference>
<reference key="3">
    <citation type="journal article" date="2003" name="Science">
        <title>Empirical analysis of transcriptional activity in the Arabidopsis genome.</title>
        <authorList>
            <person name="Yamada K."/>
            <person name="Lim J."/>
            <person name="Dale J.M."/>
            <person name="Chen H."/>
            <person name="Shinn P."/>
            <person name="Palm C.J."/>
            <person name="Southwick A.M."/>
            <person name="Wu H.C."/>
            <person name="Kim C.J."/>
            <person name="Nguyen M."/>
            <person name="Pham P.K."/>
            <person name="Cheuk R.F."/>
            <person name="Karlin-Newmann G."/>
            <person name="Liu S.X."/>
            <person name="Lam B."/>
            <person name="Sakano H."/>
            <person name="Wu T."/>
            <person name="Yu G."/>
            <person name="Miranda M."/>
            <person name="Quach H.L."/>
            <person name="Tripp M."/>
            <person name="Chang C.H."/>
            <person name="Lee J.M."/>
            <person name="Toriumi M.J."/>
            <person name="Chan M.M."/>
            <person name="Tang C.C."/>
            <person name="Onodera C.S."/>
            <person name="Deng J.M."/>
            <person name="Akiyama K."/>
            <person name="Ansari Y."/>
            <person name="Arakawa T."/>
            <person name="Banh J."/>
            <person name="Banno F."/>
            <person name="Bowser L."/>
            <person name="Brooks S.Y."/>
            <person name="Carninci P."/>
            <person name="Chao Q."/>
            <person name="Choy N."/>
            <person name="Enju A."/>
            <person name="Goldsmith A.D."/>
            <person name="Gurjal M."/>
            <person name="Hansen N.F."/>
            <person name="Hayashizaki Y."/>
            <person name="Johnson-Hopson C."/>
            <person name="Hsuan V.W."/>
            <person name="Iida K."/>
            <person name="Karnes M."/>
            <person name="Khan S."/>
            <person name="Koesema E."/>
            <person name="Ishida J."/>
            <person name="Jiang P.X."/>
            <person name="Jones T."/>
            <person name="Kawai J."/>
            <person name="Kamiya A."/>
            <person name="Meyers C."/>
            <person name="Nakajima M."/>
            <person name="Narusaka M."/>
            <person name="Seki M."/>
            <person name="Sakurai T."/>
            <person name="Satou M."/>
            <person name="Tamse R."/>
            <person name="Vaysberg M."/>
            <person name="Wallender E.K."/>
            <person name="Wong C."/>
            <person name="Yamamura Y."/>
            <person name="Yuan S."/>
            <person name="Shinozaki K."/>
            <person name="Davis R.W."/>
            <person name="Theologis A."/>
            <person name="Ecker J.R."/>
        </authorList>
    </citation>
    <scope>NUCLEOTIDE SEQUENCE [LARGE SCALE MRNA] (ISOFORM 2)</scope>
    <source>
        <strain>cv. Columbia</strain>
    </source>
</reference>
<reference key="4">
    <citation type="journal article" date="2005" name="PLoS Comput. Biol.">
        <title>Inferring hypotheses on functional relationships of genes: Analysis of the Arabidopsis thaliana subtilase gene family.</title>
        <authorList>
            <person name="Rautengarten C."/>
            <person name="Steinhauser D."/>
            <person name="Bussis D."/>
            <person name="Stintzi A."/>
            <person name="Schaller A."/>
            <person name="Kopka J."/>
            <person name="Altmann T."/>
        </authorList>
    </citation>
    <scope>GENE FAMILY</scope>
    <scope>NOMENCLATURE</scope>
</reference>
<evidence type="ECO:0000250" key="1">
    <source>
        <dbReference type="UniProtKB" id="Q39547"/>
    </source>
</evidence>
<evidence type="ECO:0000250" key="2">
    <source>
        <dbReference type="UniProtKB" id="Q84WS0"/>
    </source>
</evidence>
<evidence type="ECO:0000255" key="3"/>
<evidence type="ECO:0000255" key="4">
    <source>
        <dbReference type="PROSITE-ProRule" id="PRU00498"/>
    </source>
</evidence>
<evidence type="ECO:0000255" key="5">
    <source>
        <dbReference type="PROSITE-ProRule" id="PRU01240"/>
    </source>
</evidence>
<evidence type="ECO:0000255" key="6">
    <source>
        <dbReference type="PROSITE-ProRule" id="PRU10082"/>
    </source>
</evidence>
<evidence type="ECO:0000303" key="7">
    <source>
    </source>
</evidence>
<evidence type="ECO:0000305" key="8"/>
<evidence type="ECO:0000312" key="9">
    <source>
        <dbReference type="Araport" id="AT5G59130"/>
    </source>
</evidence>
<evidence type="ECO:0000312" key="10">
    <source>
        <dbReference type="EMBL" id="BAB09759.1"/>
    </source>
</evidence>
<keyword id="KW-0025">Alternative splicing</keyword>
<keyword id="KW-0068">Autocatalytic cleavage</keyword>
<keyword id="KW-0325">Glycoprotein</keyword>
<keyword id="KW-0378">Hydrolase</keyword>
<keyword id="KW-0645">Protease</keyword>
<keyword id="KW-1185">Reference proteome</keyword>
<keyword id="KW-0964">Secreted</keyword>
<keyword id="KW-0720">Serine protease</keyword>
<keyword id="KW-0732">Signal</keyword>
<keyword id="KW-0865">Zymogen</keyword>
<accession>Q9FIG1</accession>
<accession>F4KHS8</accession>
<accession>Q84WF9</accession>
<gene>
    <name evidence="7" type="primary">SBT4.11</name>
    <name evidence="9" type="ordered locus">At5g59130</name>
    <name evidence="10" type="ORF">MNC17.4</name>
</gene>
<protein>
    <recommendedName>
        <fullName evidence="7">Subtilisin-like protease SBT4.11</fullName>
        <ecNumber evidence="6">3.4.21.-</ecNumber>
    </recommendedName>
    <alternativeName>
        <fullName evidence="7">Subtilase subfamily 4 member 11</fullName>
        <shortName evidence="7">AtSBT4.11</shortName>
    </alternativeName>
</protein>